<gene>
    <name evidence="1" type="primary">LAP3</name>
</gene>
<comment type="function">
    <text evidence="5 7">Cytosolic metallopeptidase that catalyzes the removal of unsubstituted N-terminal hydrophobic amino acids from various peptides (PubMed:14583094, PubMed:16519517). The presence of Zn(2+) ions is essential for the peptidase activity, and the association with other cofactors can modulate the substrate spectificity of the enzyme (PubMed:16519517). For instance, in the presence of Mn(2+), it displays a specific Cys-Gly hydrolyzing activity of Cys-Gly-S-conjugates (PubMed:16519517). Involved in the metabolism of glutathione and in the degradation of glutathione S-conjugates, which may play a role in the control of the cell redox status (PubMed:14583094).</text>
</comment>
<comment type="catalytic activity">
    <reaction evidence="5">
        <text>Release of an N-terminal amino acid, Xaa-|-Yaa-, in which Xaa is preferably Leu, but may be other amino acids including Pro although not Arg or Lys, and Yaa may be Pro. Amino acid amides and methyl esters are also readily hydrolyzed, but rates on arylamides are exceedingly low.</text>
        <dbReference type="EC" id="3.4.11.1"/>
    </reaction>
</comment>
<comment type="catalytic activity">
    <reaction evidence="5">
        <text>an S-substituted L-cysteinylglycine + H2O = an S-substituted L-cysteine + glycine</text>
        <dbReference type="Rhea" id="RHEA:60444"/>
        <dbReference type="ChEBI" id="CHEBI:15377"/>
        <dbReference type="ChEBI" id="CHEBI:57305"/>
        <dbReference type="ChEBI" id="CHEBI:58717"/>
        <dbReference type="ChEBI" id="CHEBI:143103"/>
        <dbReference type="EC" id="3.4.13.23"/>
    </reaction>
    <physiologicalReaction direction="left-to-right" evidence="19">
        <dbReference type="Rhea" id="RHEA:60445"/>
    </physiologicalReaction>
</comment>
<comment type="catalytic activity">
    <reaction evidence="5">
        <text>L-cysteinylglycine + H2O = L-cysteine + glycine</text>
        <dbReference type="Rhea" id="RHEA:28783"/>
        <dbReference type="ChEBI" id="CHEBI:15377"/>
        <dbReference type="ChEBI" id="CHEBI:35235"/>
        <dbReference type="ChEBI" id="CHEBI:57305"/>
        <dbReference type="ChEBI" id="CHEBI:61694"/>
    </reaction>
    <physiologicalReaction direction="left-to-right" evidence="19">
        <dbReference type="Rhea" id="RHEA:28784"/>
    </physiologicalReaction>
</comment>
<comment type="catalytic activity">
    <reaction evidence="3">
        <text>S-benzyl-L-cysteinylglycine + H2O = S-benzyl-L-cysteine + glycine</text>
        <dbReference type="Rhea" id="RHEA:62568"/>
        <dbReference type="ChEBI" id="CHEBI:15377"/>
        <dbReference type="ChEBI" id="CHEBI:57305"/>
        <dbReference type="ChEBI" id="CHEBI:145802"/>
        <dbReference type="ChEBI" id="CHEBI:145803"/>
    </reaction>
    <physiologicalReaction direction="left-to-right" evidence="3">
        <dbReference type="Rhea" id="RHEA:62569"/>
    </physiologicalReaction>
</comment>
<comment type="catalytic activity">
    <reaction evidence="2">
        <text>Release of N-terminal proline from a peptide.</text>
        <dbReference type="EC" id="3.4.11.5"/>
    </reaction>
</comment>
<comment type="cofactor">
    <cofactor evidence="7">
        <name>Zn(2+)</name>
        <dbReference type="ChEBI" id="CHEBI:29105"/>
    </cofactor>
    <cofactor evidence="7">
        <name>Mn(2+)</name>
        <dbReference type="ChEBI" id="CHEBI:29035"/>
    </cofactor>
    <text evidence="7 13 16">Binds two metal ions per subunit. Two metal binding sites with different affinities are located in the enzyme active site and can be occupied in vitro by different metals: site 1 is occupied by Zn(2+), Mn(2+), Mg(2+) or Co(2+), while the tight binding site 2 can be occupied by only Zn(2+) or Co(2+) (PubMed:16519517). One Zn(2+) ion is tightly bound to site 2 and essential for enzyme activity in vivo, while site 1 can be occupied by different metals to give different enzymatic activities (PubMed:16519517). Mn(2+) is required for Cys-Gly hydrolysis activity (PubMed:16519517). A third metal binding site may serve a structural role, possibly stabilizing part of the interface between the N-terminal and the catalytic domain (PubMed:7619821).</text>
</comment>
<comment type="activity regulation">
    <text evidence="7">Zofenoprilat inhibits Cys-Gly hydrolysis activity.</text>
</comment>
<comment type="biophysicochemical properties">
    <kinetics>
        <KM evidence="5">0.42 mM for Cys-Gly (at pH 6.9 and 25 degrees Celsius)</KM>
        <KM evidence="5">2.3 mM for Leu-Gly (at pH 6.9 and 25 degrees Celsius)</KM>
        <KM evidence="5">2.8 mM for Met-Gly (at pH 6.9 and 25 degrees Celsius)</KM>
        <KM evidence="5">0.57 mM for Cys-Gly (at pH 7.4 and 25 degrees Celsius)</KM>
        <KM evidence="5">2.5 mM for Leu-Gly (at pH 7.4 and 25 degrees Celsius)</KM>
        <KM evidence="5">1.5 mM for Met-Gly (at pH 7.4 and 25 degrees Celsius)</KM>
        <KM evidence="5">5.2 mM for Ser-Gly (at pH 7.4 and 25 degrees Celsius)</KM>
        <KM evidence="5">0.59 mM for Cys-Gly (at pH 8.3 and 25 degrees Celsius)</KM>
        <KM evidence="5">1.5 mM for Leu-Gly (at pH 8.3 and 25 degrees Celsius)</KM>
        <KM evidence="5">1.3 mM for Met-Gly (at pH 8.3 and 25 degrees Celsius)</KM>
        <KM evidence="5">5 mM for Ser-Gly (at pH 8.3 and 25 degrees Celsius)</KM>
        <text evidence="5">kcat is 3400 min(-1) for Cys-Gly hydrolysis activity (at pH 6.9 and 25 degrees Celsius). kcat is 11500 min(-1) for Leu-Gly hydrolysis activity (at pH 6.9 and 25 degrees Celsius). kcat is 8150 min(-1) for Met-Gly hydrolysis activity (at pH 6.9 and 25 degrees Celsius) (PubMed:14583094). kcat is 6000 min(-1) for Cys-Gly hydrolysis activity (at pH 7.4 and 25 degrees Celsius). kcat is 24000 min(-1) for Leu-Gly hydrolysis activity (at pH 7.4 and 25 degrees Celsius). kcat is 28100 min(-1) for Met-Gly hydrolysis activity (at pH 7.4 and 25 degrees Celsius). kcat is 1000 min(-1) for Ser-Gly hydrolysis activity (at pH 7.4 and 25 degrees Celsius) (PubMed:14583094). kcat is 7100 min(-1) for Cys-Gly hydrolysis activity (at pH 8.3 and 25 degrees Celsius). kcat is 40500 min(-1) for Leu-Gly hydrolysis activity (at pH 8.3 and 25 degrees Celsius). kcat is 59300 min(-1) for Met-Gly hydrolysis activity (at pH 8.3 and 25 degrees Celsius). kcat is 2500 min(-1) for Ser-Gly hydrolysis activity (at pH 8.3 and 25 degrees Celsius) (PubMed:14583094).</text>
    </kinetics>
</comment>
<comment type="subunit">
    <text evidence="5">Homohexamer.</text>
</comment>
<comment type="subcellular location">
    <subcellularLocation>
        <location evidence="3">Cytoplasm</location>
    </subcellularLocation>
</comment>
<comment type="alternative products">
    <event type="alternative initiation"/>
    <isoform>
        <id>P00727-1</id>
        <name>1</name>
        <sequence type="displayed"/>
    </isoform>
    <isoform>
        <id>P00727-2</id>
        <name>2</name>
        <sequence type="described" ref="VSP_022634"/>
    </isoform>
    <isoform>
        <id>P00727-3</id>
        <name>3</name>
        <sequence type="described" ref="VSP_058150"/>
    </isoform>
</comment>
<comment type="similarity">
    <text evidence="18">Belongs to the peptidase M17 family.</text>
</comment>
<comment type="sequence caution" evidence="18">
    <conflict type="erroneous initiation">
        <sequence resource="EMBL-CDS" id="AAB28170"/>
    </conflict>
</comment>
<accession>P00727</accession>
<accession>Q2HJH5</accession>
<accession>Q2PC24</accession>
<feature type="chain" id="PRO_0000165824" description="Cytosol aminopeptidase">
    <location>
        <begin position="1"/>
        <end position="519"/>
    </location>
</feature>
<feature type="active site" evidence="12">
    <location>
        <position position="294"/>
    </location>
</feature>
<feature type="active site" evidence="12">
    <location>
        <position position="368"/>
    </location>
</feature>
<feature type="binding site" evidence="20 27">
    <location>
        <position position="202"/>
    </location>
    <ligand>
        <name>Zn(2+)</name>
        <dbReference type="ChEBI" id="CHEBI:29105"/>
        <label>3</label>
        <note>structural</note>
    </ligand>
</feature>
<feature type="binding site" evidence="20 27">
    <location>
        <position position="203"/>
    </location>
    <ligand>
        <name>Zn(2+)</name>
        <dbReference type="ChEBI" id="CHEBI:29105"/>
        <label>3</label>
        <note>structural</note>
    </ligand>
</feature>
<feature type="binding site" evidence="20 27">
    <location>
        <position position="205"/>
    </location>
    <ligand>
        <name>Zn(2+)</name>
        <dbReference type="ChEBI" id="CHEBI:29105"/>
        <label>3</label>
        <note>structural</note>
    </ligand>
</feature>
<feature type="binding site" evidence="12 13 25 27">
    <location>
        <position position="282"/>
    </location>
    <ligand>
        <name>substrate</name>
    </ligand>
</feature>
<feature type="binding site" evidence="7 8 28 29">
    <location>
        <position position="282"/>
    </location>
    <ligand>
        <name>Zn(2+)</name>
        <dbReference type="ChEBI" id="CHEBI:29105"/>
        <label>2</label>
        <note>catalytic</note>
    </ligand>
</feature>
<feature type="binding site" evidence="14 22">
    <location>
        <position position="287"/>
    </location>
    <ligand>
        <name>Mg(2+)</name>
        <dbReference type="ChEBI" id="CHEBI:18420"/>
        <note>catalytic</note>
    </ligand>
</feature>
<feature type="binding site" evidence="12 13 25 27">
    <location>
        <position position="287"/>
    </location>
    <ligand>
        <name>substrate</name>
    </ligand>
</feature>
<feature type="binding site" evidence="7 8 14 28 29">
    <location>
        <position position="287"/>
    </location>
    <ligand>
        <name>Zn(2+)</name>
        <dbReference type="ChEBI" id="CHEBI:29105"/>
        <label>1</label>
        <note>catalytic</note>
    </ligand>
</feature>
<feature type="binding site" evidence="7 8 28 29">
    <location>
        <position position="287"/>
    </location>
    <ligand>
        <name>Zn(2+)</name>
        <dbReference type="ChEBI" id="CHEBI:29105"/>
        <label>2</label>
        <note>catalytic</note>
    </ligand>
</feature>
<feature type="binding site" evidence="13 27">
    <location>
        <position position="292"/>
    </location>
    <ligand>
        <name>substrate</name>
    </ligand>
</feature>
<feature type="binding site" evidence="12 13 25 27">
    <location>
        <position position="294"/>
    </location>
    <ligand>
        <name>substrate</name>
    </ligand>
</feature>
<feature type="binding site" evidence="20 27">
    <location>
        <position position="303"/>
    </location>
    <ligand>
        <name>Zn(2+)</name>
        <dbReference type="ChEBI" id="CHEBI:29105"/>
        <label>3</label>
        <note>structural</note>
    </ligand>
</feature>
<feature type="binding site" evidence="12 25">
    <location>
        <position position="305"/>
    </location>
    <ligand>
        <name>substrate</name>
    </ligand>
</feature>
<feature type="binding site" evidence="7 8 28 29">
    <location>
        <position position="305"/>
    </location>
    <ligand>
        <name>Zn(2+)</name>
        <dbReference type="ChEBI" id="CHEBI:29105"/>
        <label>2</label>
        <note>catalytic</note>
    </ligand>
</feature>
<feature type="binding site" evidence="14 22">
    <location>
        <position position="364"/>
    </location>
    <ligand>
        <name>Mg(2+)</name>
        <dbReference type="ChEBI" id="CHEBI:18420"/>
        <note>catalytic</note>
    </ligand>
</feature>
<feature type="binding site" evidence="13 27">
    <location>
        <position position="364"/>
    </location>
    <ligand>
        <name>substrate</name>
    </ligand>
</feature>
<feature type="binding site" evidence="7 8 14 28 29">
    <location>
        <position position="364"/>
    </location>
    <ligand>
        <name>Zn(2+)</name>
        <dbReference type="ChEBI" id="CHEBI:29105"/>
        <label>1</label>
        <note>catalytic</note>
    </ligand>
</feature>
<feature type="binding site" evidence="14 22">
    <location>
        <position position="366"/>
    </location>
    <ligand>
        <name>Mg(2+)</name>
        <dbReference type="ChEBI" id="CHEBI:18420"/>
        <note>catalytic</note>
    </ligand>
</feature>
<feature type="binding site" evidence="7 8 14 28 29">
    <location>
        <position position="366"/>
    </location>
    <ligand>
        <name>Zn(2+)</name>
        <dbReference type="ChEBI" id="CHEBI:29105"/>
        <label>1</label>
        <note>catalytic</note>
    </ligand>
</feature>
<feature type="binding site" evidence="7 8 14 22 28 29">
    <location>
        <position position="366"/>
    </location>
    <ligand>
        <name>Zn(2+)</name>
        <dbReference type="ChEBI" id="CHEBI:29105"/>
        <label>2</label>
        <note>catalytic</note>
    </ligand>
</feature>
<feature type="modified residue" description="Phosphoserine" evidence="3">
    <location>
        <position position="42"/>
    </location>
</feature>
<feature type="modified residue" description="N6-succinyllysine" evidence="4">
    <location>
        <position position="45"/>
    </location>
</feature>
<feature type="modified residue" description="Phosphoserine" evidence="3">
    <location>
        <position position="54"/>
    </location>
</feature>
<feature type="modified residue" description="N6-succinyllysine" evidence="4">
    <location>
        <position position="61"/>
    </location>
</feature>
<feature type="modified residue" description="N6-succinyllysine" evidence="4">
    <location>
        <position position="103"/>
    </location>
</feature>
<feature type="modified residue" description="Phosphoserine" evidence="4">
    <location>
        <position position="180"/>
    </location>
</feature>
<feature type="modified residue" description="Phosphoserine" evidence="1">
    <location>
        <position position="194"/>
    </location>
</feature>
<feature type="modified residue" description="Phosphoserine" evidence="1">
    <location>
        <position position="238"/>
    </location>
</feature>
<feature type="modified residue" description="N6-acetyllysine; alternate" evidence="4">
    <location>
        <position position="455"/>
    </location>
</feature>
<feature type="modified residue" description="N6-succinyllysine; alternate" evidence="4">
    <location>
        <position position="455"/>
    </location>
</feature>
<feature type="modified residue" description="N6-succinyllysine" evidence="4">
    <location>
        <position position="476"/>
    </location>
</feature>
<feature type="modified residue" description="N6-acetyllysine; alternate" evidence="4">
    <location>
        <position position="489"/>
    </location>
</feature>
<feature type="modified residue" description="N6-succinyllysine; alternate" evidence="4">
    <location>
        <position position="489"/>
    </location>
</feature>
<feature type="splice variant" id="VSP_058150" description="In isoform 3." evidence="18">
    <location>
        <begin position="1"/>
        <end position="31"/>
    </location>
</feature>
<feature type="splice variant" id="VSP_022634" description="In isoform 2." evidence="17">
    <location>
        <begin position="11"/>
        <end position="31"/>
    </location>
</feature>
<feature type="sequence conflict" description="In Ref. 2; AAB28170." evidence="18" ref="2">
    <original>P</original>
    <variation>S</variation>
    <location>
        <position position="77"/>
    </location>
</feature>
<feature type="sequence conflict" description="In Ref. 4; AA sequence and 5; AA sequence." evidence="18" ref="4 5">
    <original>LW</original>
    <variation>M</variation>
    <location>
        <begin position="414"/>
        <end position="415"/>
    </location>
</feature>
<feature type="sequence conflict" description="In Ref. 4; AA sequence and 5; AA sequence." evidence="18" ref="4 5">
    <location>
        <begin position="506"/>
        <end position="513"/>
    </location>
</feature>
<feature type="strand" evidence="32">
    <location>
        <begin position="34"/>
        <end position="40"/>
    </location>
</feature>
<feature type="strand" evidence="30">
    <location>
        <begin position="47"/>
        <end position="49"/>
    </location>
</feature>
<feature type="helix" evidence="32">
    <location>
        <begin position="54"/>
        <end position="62"/>
    </location>
</feature>
<feature type="turn" evidence="32">
    <location>
        <begin position="63"/>
        <end position="65"/>
    </location>
</feature>
<feature type="helix" evidence="32">
    <location>
        <begin position="66"/>
        <end position="73"/>
    </location>
</feature>
<feature type="strand" evidence="32">
    <location>
        <begin position="83"/>
        <end position="90"/>
    </location>
</feature>
<feature type="strand" evidence="32">
    <location>
        <begin position="93"/>
        <end position="100"/>
    </location>
</feature>
<feature type="turn" evidence="32">
    <location>
        <begin position="110"/>
        <end position="113"/>
    </location>
</feature>
<feature type="helix" evidence="32">
    <location>
        <begin position="116"/>
        <end position="134"/>
    </location>
</feature>
<feature type="strand" evidence="32">
    <location>
        <begin position="138"/>
        <end position="142"/>
    </location>
</feature>
<feature type="helix" evidence="32">
    <location>
        <begin position="148"/>
        <end position="159"/>
    </location>
</feature>
<feature type="strand" evidence="32">
    <location>
        <begin position="174"/>
        <end position="181"/>
    </location>
</feature>
<feature type="helix" evidence="32">
    <location>
        <begin position="183"/>
        <end position="204"/>
    </location>
</feature>
<feature type="turn" evidence="32">
    <location>
        <begin position="207"/>
        <end position="209"/>
    </location>
</feature>
<feature type="helix" evidence="32">
    <location>
        <begin position="212"/>
        <end position="226"/>
    </location>
</feature>
<feature type="strand" evidence="32">
    <location>
        <begin position="228"/>
        <end position="235"/>
    </location>
</feature>
<feature type="helix" evidence="32">
    <location>
        <begin position="237"/>
        <end position="242"/>
    </location>
</feature>
<feature type="helix" evidence="32">
    <location>
        <begin position="246"/>
        <end position="252"/>
    </location>
</feature>
<feature type="strand" evidence="32">
    <location>
        <begin position="255"/>
        <end position="257"/>
    </location>
</feature>
<feature type="strand" evidence="32">
    <location>
        <begin position="260"/>
        <end position="267"/>
    </location>
</feature>
<feature type="strand" evidence="32">
    <location>
        <begin position="269"/>
        <end position="271"/>
    </location>
</feature>
<feature type="strand" evidence="32">
    <location>
        <begin position="277"/>
        <end position="281"/>
    </location>
</feature>
<feature type="strand" evidence="32">
    <location>
        <begin position="283"/>
        <end position="287"/>
    </location>
</feature>
<feature type="helix" evidence="32">
    <location>
        <begin position="299"/>
        <end position="304"/>
    </location>
</feature>
<feature type="helix" evidence="32">
    <location>
        <begin position="307"/>
        <end position="321"/>
    </location>
</feature>
<feature type="strand" evidence="32">
    <location>
        <begin position="325"/>
        <end position="337"/>
    </location>
</feature>
<feature type="strand" evidence="32">
    <location>
        <begin position="348"/>
        <end position="351"/>
    </location>
</feature>
<feature type="strand" evidence="32">
    <location>
        <begin position="357"/>
        <end position="361"/>
    </location>
</feature>
<feature type="turn" evidence="31">
    <location>
        <begin position="363"/>
        <end position="366"/>
    </location>
</feature>
<feature type="helix" evidence="32">
    <location>
        <begin position="367"/>
        <end position="379"/>
    </location>
</feature>
<feature type="strand" evidence="32">
    <location>
        <begin position="384"/>
        <end position="390"/>
    </location>
</feature>
<feature type="helix" evidence="32">
    <location>
        <begin position="394"/>
        <end position="400"/>
    </location>
</feature>
<feature type="strand" evidence="32">
    <location>
        <begin position="405"/>
        <end position="410"/>
    </location>
</feature>
<feature type="helix" evidence="32">
    <location>
        <begin position="412"/>
        <end position="425"/>
    </location>
</feature>
<feature type="strand" evidence="32">
    <location>
        <begin position="429"/>
        <end position="431"/>
    </location>
</feature>
<feature type="helix" evidence="32">
    <location>
        <begin position="436"/>
        <end position="443"/>
    </location>
</feature>
<feature type="strand" evidence="32">
    <location>
        <begin position="446"/>
        <end position="453"/>
    </location>
</feature>
<feature type="strand" evidence="32">
    <location>
        <begin position="455"/>
        <end position="457"/>
    </location>
</feature>
<feature type="helix" evidence="32">
    <location>
        <begin position="460"/>
        <end position="469"/>
    </location>
</feature>
<feature type="strand" evidence="32">
    <location>
        <begin position="475"/>
        <end position="481"/>
    </location>
</feature>
<feature type="helix" evidence="32">
    <location>
        <begin position="483"/>
        <end position="485"/>
    </location>
</feature>
<feature type="strand" evidence="32">
    <location>
        <begin position="486"/>
        <end position="492"/>
    </location>
</feature>
<feature type="strand" evidence="32">
    <location>
        <begin position="497"/>
        <end position="499"/>
    </location>
</feature>
<feature type="helix" evidence="32">
    <location>
        <begin position="504"/>
        <end position="515"/>
    </location>
</feature>
<feature type="initiator methionine" description="Removed" evidence="6 9 10 11 12">
    <location sequence="P00727-3">
        <position position="1"/>
    </location>
</feature>
<dbReference type="EC" id="3.4.11.1" evidence="5"/>
<dbReference type="EC" id="3.4.13.23" evidence="5"/>
<dbReference type="EC" id="3.4.11.5" evidence="2"/>
<dbReference type="EMBL" id="S65367">
    <property type="protein sequence ID" value="AAB28170.1"/>
    <property type="status" value="ALT_INIT"/>
    <property type="molecule type" value="mRNA"/>
</dbReference>
<dbReference type="EMBL" id="BC105385">
    <property type="protein sequence ID" value="AAI05386.1"/>
    <property type="molecule type" value="mRNA"/>
</dbReference>
<dbReference type="EMBL" id="AJ871963">
    <property type="protein sequence ID" value="CAI44744.1"/>
    <property type="molecule type" value="Genomic_DNA"/>
</dbReference>
<dbReference type="PIR" id="A54338">
    <property type="entry name" value="APBOL"/>
</dbReference>
<dbReference type="RefSeq" id="NP_776523.2">
    <molecule id="P00727-1"/>
    <property type="nucleotide sequence ID" value="NM_174098.3"/>
</dbReference>
<dbReference type="PDB" id="1BLL">
    <property type="method" value="X-ray"/>
    <property type="resolution" value="2.40 A"/>
    <property type="chains" value="E=33-519"/>
</dbReference>
<dbReference type="PDB" id="1BPM">
    <property type="method" value="X-ray"/>
    <property type="resolution" value="2.90 A"/>
    <property type="chains" value="A=33-519"/>
</dbReference>
<dbReference type="PDB" id="1BPN">
    <property type="method" value="X-ray"/>
    <property type="resolution" value="2.90 A"/>
    <property type="chains" value="A=33-519"/>
</dbReference>
<dbReference type="PDB" id="1LAM">
    <property type="method" value="X-ray"/>
    <property type="resolution" value="1.60 A"/>
    <property type="chains" value="A=33-516"/>
</dbReference>
<dbReference type="PDB" id="1LAN">
    <property type="method" value="X-ray"/>
    <property type="resolution" value="1.90 A"/>
    <property type="chains" value="A=33-516"/>
</dbReference>
<dbReference type="PDB" id="1LAP">
    <property type="method" value="X-ray"/>
    <property type="resolution" value="2.70 A"/>
    <property type="chains" value="A=33-519"/>
</dbReference>
<dbReference type="PDB" id="1LCP">
    <property type="method" value="X-ray"/>
    <property type="resolution" value="1.65 A"/>
    <property type="chains" value="A/B=33-516"/>
</dbReference>
<dbReference type="PDB" id="2EWB">
    <property type="method" value="X-ray"/>
    <property type="resolution" value="1.85 A"/>
    <property type="chains" value="A=33-518"/>
</dbReference>
<dbReference type="PDB" id="2J9A">
    <property type="method" value="X-ray"/>
    <property type="resolution" value="1.73 A"/>
    <property type="chains" value="A=33-519"/>
</dbReference>
<dbReference type="PDBsum" id="1BLL"/>
<dbReference type="PDBsum" id="1BPM"/>
<dbReference type="PDBsum" id="1BPN"/>
<dbReference type="PDBsum" id="1LAM"/>
<dbReference type="PDBsum" id="1LAN"/>
<dbReference type="PDBsum" id="1LAP"/>
<dbReference type="PDBsum" id="1LCP"/>
<dbReference type="PDBsum" id="2EWB"/>
<dbReference type="PDBsum" id="2J9A"/>
<dbReference type="SMR" id="P00727"/>
<dbReference type="FunCoup" id="P00727">
    <property type="interactions" value="1918"/>
</dbReference>
<dbReference type="STRING" id="9913.ENSBTAP00000007860"/>
<dbReference type="BindingDB" id="P00727"/>
<dbReference type="ChEMBL" id="CHEMBL1671610"/>
<dbReference type="DrugCentral" id="P00727"/>
<dbReference type="MEROPS" id="M17.001"/>
<dbReference type="PaxDb" id="9913-ENSBTAP00000007860"/>
<dbReference type="PeptideAtlas" id="P00727"/>
<dbReference type="Ensembl" id="ENSBTAT00000007860.6">
    <molecule id="P00727-1"/>
    <property type="protein sequence ID" value="ENSBTAP00000007860.5"/>
    <property type="gene ID" value="ENSBTAG00000005989.6"/>
</dbReference>
<dbReference type="GeneID" id="781648"/>
<dbReference type="KEGG" id="bta:781648"/>
<dbReference type="CTD" id="51056"/>
<dbReference type="VEuPathDB" id="HostDB:ENSBTAG00000005989"/>
<dbReference type="eggNOG" id="KOG2597">
    <property type="taxonomic scope" value="Eukaryota"/>
</dbReference>
<dbReference type="GeneTree" id="ENSGT00530000063255"/>
<dbReference type="InParanoid" id="P00727"/>
<dbReference type="OMA" id="WPMPLPE"/>
<dbReference type="OrthoDB" id="412814at2759"/>
<dbReference type="TreeFam" id="TF314954"/>
<dbReference type="BRENDA" id="3.4.11.1">
    <property type="organism ID" value="908"/>
</dbReference>
<dbReference type="SABIO-RK" id="P00727"/>
<dbReference type="EvolutionaryTrace" id="P00727"/>
<dbReference type="Proteomes" id="UP000009136">
    <property type="component" value="Chromosome 6"/>
</dbReference>
<dbReference type="Bgee" id="ENSBTAG00000005989">
    <property type="expression patterns" value="Expressed in caput epididymis and 102 other cell types or tissues"/>
</dbReference>
<dbReference type="GO" id="GO:0005737">
    <property type="term" value="C:cytoplasm"/>
    <property type="evidence" value="ECO:0000314"/>
    <property type="project" value="CAFA"/>
</dbReference>
<dbReference type="GO" id="GO:0005739">
    <property type="term" value="C:mitochondrion"/>
    <property type="evidence" value="ECO:0000250"/>
    <property type="project" value="AgBase"/>
</dbReference>
<dbReference type="GO" id="GO:0004180">
    <property type="term" value="F:carboxypeptidase activity"/>
    <property type="evidence" value="ECO:0007669"/>
    <property type="project" value="RHEA"/>
</dbReference>
<dbReference type="GO" id="GO:0016805">
    <property type="term" value="F:dipeptidase activity"/>
    <property type="evidence" value="ECO:0007669"/>
    <property type="project" value="UniProtKB-KW"/>
</dbReference>
<dbReference type="GO" id="GO:0097718">
    <property type="term" value="F:disordered domain specific binding"/>
    <property type="evidence" value="ECO:0000353"/>
    <property type="project" value="CAFA"/>
</dbReference>
<dbReference type="GO" id="GO:0030145">
    <property type="term" value="F:manganese ion binding"/>
    <property type="evidence" value="ECO:0007669"/>
    <property type="project" value="InterPro"/>
</dbReference>
<dbReference type="GO" id="GO:0070006">
    <property type="term" value="F:metalloaminopeptidase activity"/>
    <property type="evidence" value="ECO:0007669"/>
    <property type="project" value="InterPro"/>
</dbReference>
<dbReference type="GO" id="GO:0008233">
    <property type="term" value="F:peptidase activity"/>
    <property type="evidence" value="ECO:0000250"/>
    <property type="project" value="AgBase"/>
</dbReference>
<dbReference type="GO" id="GO:0006508">
    <property type="term" value="P:proteolysis"/>
    <property type="evidence" value="ECO:0000318"/>
    <property type="project" value="GO_Central"/>
</dbReference>
<dbReference type="CDD" id="cd00433">
    <property type="entry name" value="Peptidase_M17"/>
    <property type="match status" value="1"/>
</dbReference>
<dbReference type="FunFam" id="3.40.220.10:FF:000005">
    <property type="entry name" value="cytosol aminopeptidase"/>
    <property type="match status" value="1"/>
</dbReference>
<dbReference type="FunFam" id="3.40.630.10:FF:000031">
    <property type="entry name" value="cytosol aminopeptidase"/>
    <property type="match status" value="1"/>
</dbReference>
<dbReference type="Gene3D" id="3.40.220.10">
    <property type="entry name" value="Leucine Aminopeptidase, subunit E, domain 1"/>
    <property type="match status" value="1"/>
</dbReference>
<dbReference type="Gene3D" id="3.40.630.10">
    <property type="entry name" value="Zn peptidases"/>
    <property type="match status" value="1"/>
</dbReference>
<dbReference type="HAMAP" id="MF_00181">
    <property type="entry name" value="Cytosol_peptidase_M17"/>
    <property type="match status" value="1"/>
</dbReference>
<dbReference type="InterPro" id="IPR011356">
    <property type="entry name" value="Leucine_aapep/pepB"/>
</dbReference>
<dbReference type="InterPro" id="IPR043472">
    <property type="entry name" value="Macro_dom-like"/>
</dbReference>
<dbReference type="InterPro" id="IPR000819">
    <property type="entry name" value="Peptidase_M17_C"/>
</dbReference>
<dbReference type="InterPro" id="IPR023042">
    <property type="entry name" value="Peptidase_M17_leu_NH2_pept"/>
</dbReference>
<dbReference type="InterPro" id="IPR008283">
    <property type="entry name" value="Peptidase_M17_N"/>
</dbReference>
<dbReference type="PANTHER" id="PTHR11963:SF23">
    <property type="entry name" value="CYTOSOL AMINOPEPTIDASE"/>
    <property type="match status" value="1"/>
</dbReference>
<dbReference type="PANTHER" id="PTHR11963">
    <property type="entry name" value="LEUCINE AMINOPEPTIDASE-RELATED"/>
    <property type="match status" value="1"/>
</dbReference>
<dbReference type="Pfam" id="PF00883">
    <property type="entry name" value="Peptidase_M17"/>
    <property type="match status" value="1"/>
</dbReference>
<dbReference type="Pfam" id="PF02789">
    <property type="entry name" value="Peptidase_M17_N"/>
    <property type="match status" value="1"/>
</dbReference>
<dbReference type="PRINTS" id="PR00481">
    <property type="entry name" value="LAMNOPPTDASE"/>
</dbReference>
<dbReference type="SUPFAM" id="SSF52949">
    <property type="entry name" value="Macro domain-like"/>
    <property type="match status" value="1"/>
</dbReference>
<dbReference type="SUPFAM" id="SSF53187">
    <property type="entry name" value="Zn-dependent exopeptidases"/>
    <property type="match status" value="1"/>
</dbReference>
<dbReference type="PROSITE" id="PS00631">
    <property type="entry name" value="CYTOSOL_AP"/>
    <property type="match status" value="1"/>
</dbReference>
<keyword id="KW-0002">3D-structure</keyword>
<keyword id="KW-0007">Acetylation</keyword>
<keyword id="KW-0024">Alternative initiation</keyword>
<keyword id="KW-0031">Aminopeptidase</keyword>
<keyword id="KW-0170">Cobalt</keyword>
<keyword id="KW-0963">Cytoplasm</keyword>
<keyword id="KW-0224">Dipeptidase</keyword>
<keyword id="KW-0903">Direct protein sequencing</keyword>
<keyword id="KW-0378">Hydrolase</keyword>
<keyword id="KW-0460">Magnesium</keyword>
<keyword id="KW-0464">Manganese</keyword>
<keyword id="KW-0479">Metal-binding</keyword>
<keyword id="KW-0597">Phosphoprotein</keyword>
<keyword id="KW-0645">Protease</keyword>
<keyword id="KW-1185">Reference proteome</keyword>
<keyword id="KW-0862">Zinc</keyword>
<sequence>MFLLPLPAAARVAVRHLSVKRLWAPGPAAADMTKGLVLGIYSKEKEEDEPQFTSAGENFNKLVSGKLREILNISGPPLKAGKTRTFYGLHEDFPSVVVVGLGKKTAGIDEQENWHEGKENIRAAVAAGCRQIQDLEIPSVEVDPCGDAQAAAEGAVLGLYEYDDLKQKRKVVVSAKLHGSEDQEAWQRGVLFASGQNLARRLMETPANEMTPTKFAEIVEENLKSASIKTDVFIRPKSWIEEQEMGSFLSVAKGSEEPPVFLEIHYKGSPNASEPPLVFVGKGITFDSGGISIKAAANMDLMRADMGGAATICSAIVSAAKLDLPINIVGLAPLCENMPSGKANKPGDVVRARNGKTIQVDNTDAEGRLILADALCYAHTFNPKVIINAATLTGAMDIALGSGATGVFTNSSWLWNKLFEASIETGDRVWRMPLFEHYTRQVIDCQLADVNNIGKYRSAGACTAAAFLKEFVTHPKWAHLDIAGVMTNKDEVPYLRKGMAGRPTRTLIEFLFRFSQDSA</sequence>
<protein>
    <recommendedName>
        <fullName evidence="18">Cytosol aminopeptidase</fullName>
        <ecNumber evidence="5">3.4.11.1</ecNumber>
    </recommendedName>
    <alternativeName>
        <fullName evidence="19">Cysteinylglycine-S-conjugate dipeptidase</fullName>
        <ecNumber evidence="5">3.4.13.23</ecNumber>
    </alternativeName>
    <alternativeName>
        <fullName evidence="1">Leucine aminopeptidase 3</fullName>
        <shortName>LAP-3</shortName>
    </alternativeName>
    <alternativeName>
        <fullName evidence="15">Leucyl aminopeptidase</fullName>
        <shortName evidence="15">LAP</shortName>
    </alternativeName>
    <alternativeName>
        <fullName evidence="1">Peptidase S</fullName>
    </alternativeName>
    <alternativeName>
        <fullName evidence="2">Proline aminopeptidase</fullName>
        <ecNumber evidence="2">3.4.11.5</ecNumber>
    </alternativeName>
    <alternativeName>
        <fullName evidence="1">Prolyl aminopeptidase</fullName>
    </alternativeName>
</protein>
<name>AMPL_BOVIN</name>
<proteinExistence type="evidence at protein level"/>
<reference key="1">
    <citation type="journal article" date="2009" name="Science">
        <title>The genome sequence of taurine cattle: a window to ruminant biology and evolution.</title>
        <authorList>
            <consortium name="The bovine genome sequencing and analysis consortium"/>
        </authorList>
    </citation>
    <scope>NUCLEOTIDE SEQUENCE [LARGE SCALE GENOMIC DNA]</scope>
    <source>
        <strain>Hereford</strain>
    </source>
</reference>
<reference key="2">
    <citation type="journal article" date="1993" name="Biochemistry">
        <title>Isolation of bovine kidney leucine aminopeptidase cDNA: comparison with the lens enzyme and tissue-specific expression of two mRNAs.</title>
        <authorList>
            <person name="Wallner B.P."/>
            <person name="Hession C."/>
            <person name="Tizard R."/>
            <person name="Frey A.Z."/>
            <person name="Zuliani A."/>
            <person name="Mura C."/>
            <person name="Jahngen-Hodge J."/>
            <person name="Taylor A."/>
        </authorList>
    </citation>
    <scope>NUCLEOTIDE SEQUENCE [MRNA] (ISOFORM 2)</scope>
    <source>
        <tissue>Kidney</tissue>
    </source>
</reference>
<reference key="3">
    <citation type="submission" date="2005-09" db="EMBL/GenBank/DDBJ databases">
        <authorList>
            <consortium name="NIH - Mammalian Gene Collection (MGC) project"/>
        </authorList>
    </citation>
    <scope>NUCLEOTIDE SEQUENCE [LARGE SCALE MRNA] OF 11-519 (ISOFORM 1)</scope>
    <source>
        <strain>Hereford</strain>
        <tissue>Hypothalamus</tissue>
    </source>
</reference>
<reference key="4">
    <citation type="journal article" date="1982" name="J. Biol. Chem.">
        <title>The primary structure of leucine aminopeptidase from bovine eye lens.</title>
        <authorList>
            <person name="Cuypers H.T."/>
            <person name="van Loon-Klaassen L.A.H."/>
            <person name="Vree Egberts W.T.M."/>
            <person name="de Jong W.W."/>
            <person name="Bloemendal H."/>
        </authorList>
    </citation>
    <scope>PROTEIN SEQUENCE (ISOFORM 3)</scope>
    <scope>CLEAVAGE OF INITIATOR METHIONINE (ISOFORM 3)</scope>
    <source>
        <tissue>Lens</tissue>
    </source>
</reference>
<reference key="5">
    <citation type="journal article" date="1982" name="J. Biol. Chem.">
        <title>Sulfhydryl content of bovine eye lens leucine aminopeptidase. Determination of the reactivity of the sulfhydryl groups of the zinc metalloenzyme, of the enzyme activated by Mg2+, Mn2+, and Co2+, and of the metal-free apoenzyme.</title>
        <authorList>
            <person name="Cuypers H.T."/>
            <person name="van Loon-Klaassen L.A.H."/>
            <person name="Vree Egberts W.T.M."/>
            <person name="de Jong W.W."/>
            <person name="Bloemendal H."/>
        </authorList>
    </citation>
    <scope>PROTEIN SEQUENCE (ISOFORM 3)</scope>
    <scope>CLEAVAGE OF INITIATOR METHIONINE (ISOFORM 3)</scope>
</reference>
<reference key="6">
    <citation type="submission" date="2005-01" db="EMBL/GenBank/DDBJ databases">
        <authorList>
            <person name="Seroussi E."/>
        </authorList>
    </citation>
    <scope>NUCLEOTIDE SEQUENCE [GENOMIC DNA] OF 431-478</scope>
    <source>
        <strain>Holstein</strain>
    </source>
</reference>
<reference key="7">
    <citation type="journal article" date="2004" name="Biochem. J.">
        <title>New role for leucyl aminopeptidase in glutathione turnover.</title>
        <authorList>
            <person name="Cappiello M."/>
            <person name="Lazzarotti A."/>
            <person name="Buono F."/>
            <person name="Scaloni A."/>
            <person name="D'Ambrosio C."/>
            <person name="Amodeo P."/>
            <person name="Mendez B.L."/>
            <person name="Pelosi P."/>
            <person name="Del Corso A."/>
            <person name="Mura U."/>
        </authorList>
    </citation>
    <scope>FUNCTION</scope>
    <scope>BIOPHYSICOCHEMICAL PROPERTIES</scope>
    <scope>CATALYTIC ACTIVITY</scope>
    <scope>SUBUNIT</scope>
</reference>
<reference evidence="26" key="8">
    <citation type="journal article" date="1990" name="Proc. Natl. Acad. Sci. U.S.A.">
        <title>Molecular structure of leucine aminopeptidase at 2.7-A resolution.</title>
        <authorList>
            <person name="Burley S.K."/>
            <person name="David P.R."/>
            <person name="Taylor A."/>
            <person name="Lipscomb W.N."/>
        </authorList>
    </citation>
    <scope>X-RAY CRYSTALLOGRAPHY (2.7 ANGSTROMS) (ISOFORM 3) IN COMPLEX WITH ZINC</scope>
    <scope>CLEAVAGE OF INITIATOR METHIONINE (ISOFORM 3)</scope>
</reference>
<reference key="9">
    <citation type="journal article" date="1992" name="J. Mol. Biol.">
        <title>Structure determination and refinement of bovine lens leucine aminopeptidase and its complex with bestatin.</title>
        <authorList>
            <person name="Burley S.K."/>
            <person name="David P.R."/>
            <person name="Sweet R.M."/>
            <person name="Taylor A."/>
            <person name="Lipscomb W.N."/>
        </authorList>
    </citation>
    <scope>X-RAY CRYSTALLOGRAPHY (3.0 ANGSTROMS) (ISOFORM 3) IN COMPLEX WITH BESTATIN</scope>
    <scope>CLEAVAGE OF INITIATOR METHIONINE (ISOFORM 3)</scope>
</reference>
<reference evidence="21" key="10">
    <citation type="journal article" date="1993" name="Biochemistry">
        <title>X-ray crystallographic determination of the structure of bovine lens leucine aminopeptidase complexed with amastatin: formulation of a catalytic mechanism featuring a gem-diolate transition state.</title>
        <authorList>
            <person name="Kim H."/>
            <person name="Lipscomb W.N."/>
        </authorList>
    </citation>
    <scope>X-RAY CRYSTALLOGRAPHY (2.40 ANGSTROMS) OF 33-519 IN COMPLEX WITH ZINC AND AMASTATIN</scope>
</reference>
<reference evidence="22 23" key="11">
    <citation type="journal article" date="1993" name="Proc. Natl. Acad. Sci. U.S.A.">
        <title>Differentiation and identification of the two catalytic metal binding sites in bovine lens leucine aminopeptidase by x-ray crystallography.</title>
        <authorList>
            <person name="Kim H."/>
            <person name="Lipscomb W.N."/>
        </authorList>
    </citation>
    <scope>X-RAY CRYSTALLOGRAPHY (2.90 ANGSTROMS) OF 33-519 IN COMPLEX WITH MAGNESIUM AND ZINC</scope>
</reference>
<reference evidence="24 25" key="12">
    <citation type="journal article" date="1995" name="Biochemistry">
        <title>Two-metal ion mechanism of bovine lens leucine aminopeptidase: active site solvent structure and binding mode of L-leucinal, a gem-diolate transition state analogue, by X-ray crystallography.</title>
        <authorList>
            <person name="Straeter N."/>
            <person name="Lipscomb W.N."/>
        </authorList>
    </citation>
    <scope>X-RAY CRYSTALLOGRAPHY (1.6 ANGSTROMS) (ISOFORM 3) IN COMPLEX WITH ZINC AND LEUCINE</scope>
    <scope>CLEAVAGE OF INITIATOR METHIONINE (ISOFORM 3)</scope>
    <scope>ACTIVE SITE</scope>
</reference>
<reference evidence="27" key="13">
    <citation type="journal article" date="1995" name="Biochemistry">
        <title>Transition state analogue L-leucinephosphonic acid bound to bovine lens leucine aminopeptidase: X-ray structure at 1.65 A resolution in a new crystal form.</title>
        <authorList>
            <person name="Strater N."/>
            <person name="Lipscomb W.N."/>
        </authorList>
    </citation>
    <scope>X-RAY CRYSTALLOGRAPHY (1.65 ANGSTROMS) OF 33-516 IN COMPLEX WITH LEUCINE PHOSPHONIC ACID AND ZINC</scope>
</reference>
<reference evidence="28" key="14">
    <citation type="journal article" date="2006" name="Biochemistry">
        <title>Metal ion substitution in the catalytic site greatly affects the binding of sulfhydryl-containing compounds to leucyl aminopeptidase.</title>
        <authorList>
            <person name="Cappiello M."/>
            <person name="Alterio V."/>
            <person name="Amodeo P."/>
            <person name="Del Corso A."/>
            <person name="Scaloni A."/>
            <person name="Pedone C."/>
            <person name="Moschini R."/>
            <person name="De Donatis G.M."/>
            <person name="De Simone G."/>
            <person name="Mura U."/>
        </authorList>
    </citation>
    <scope>X-RAY CRYSTALLOGRAPHY (1.85 ANGSTROMS) OF 33-518 IN COMPLEX WITH ZINC AND ZOFENOPRILAT</scope>
    <scope>FUNCTION</scope>
    <scope>COFACTOR</scope>
    <scope>ACTIVITY REGULATION</scope>
    <scope>BIOPHYSICOCHEMICAL PROPERTIES</scope>
</reference>
<reference evidence="29" key="15">
    <citation type="journal article" date="2006" name="FEBS Lett.">
        <title>Binding structure of the leucine aminopeptidase inhibitor microginin FR1.</title>
        <authorList>
            <person name="Kraft M."/>
            <person name="Schleberger C."/>
            <person name="Weckesser J."/>
            <person name="Schulz G.E."/>
        </authorList>
    </citation>
    <scope>X-RAY CRYSTALLOGRAPHY (1.73 ANGSTROMS) OF 33-519 IN COMPLEX WITH ZINC AND MICROGININ FR1</scope>
</reference>
<evidence type="ECO:0000250" key="1">
    <source>
        <dbReference type="UniProtKB" id="P28838"/>
    </source>
</evidence>
<evidence type="ECO:0000250" key="2">
    <source>
        <dbReference type="UniProtKB" id="P28839"/>
    </source>
</evidence>
<evidence type="ECO:0000250" key="3">
    <source>
        <dbReference type="UniProtKB" id="Q68FS4"/>
    </source>
</evidence>
<evidence type="ECO:0000250" key="4">
    <source>
        <dbReference type="UniProtKB" id="Q9CPY7"/>
    </source>
</evidence>
<evidence type="ECO:0000269" key="5">
    <source>
    </source>
</evidence>
<evidence type="ECO:0000269" key="6">
    <source>
    </source>
</evidence>
<evidence type="ECO:0000269" key="7">
    <source>
    </source>
</evidence>
<evidence type="ECO:0000269" key="8">
    <source>
    </source>
</evidence>
<evidence type="ECO:0000269" key="9">
    <source>
    </source>
</evidence>
<evidence type="ECO:0000269" key="10">
    <source>
    </source>
</evidence>
<evidence type="ECO:0000269" key="11">
    <source>
    </source>
</evidence>
<evidence type="ECO:0000269" key="12">
    <source>
    </source>
</evidence>
<evidence type="ECO:0000269" key="13">
    <source>
    </source>
</evidence>
<evidence type="ECO:0000269" key="14">
    <source>
    </source>
</evidence>
<evidence type="ECO:0000303" key="15">
    <source>
    </source>
</evidence>
<evidence type="ECO:0000303" key="16">
    <source>
    </source>
</evidence>
<evidence type="ECO:0000303" key="17">
    <source>
    </source>
</evidence>
<evidence type="ECO:0000305" key="18"/>
<evidence type="ECO:0000305" key="19">
    <source>
    </source>
</evidence>
<evidence type="ECO:0000305" key="20">
    <source>
    </source>
</evidence>
<evidence type="ECO:0007744" key="21">
    <source>
        <dbReference type="PDB" id="1BLL"/>
    </source>
</evidence>
<evidence type="ECO:0007744" key="22">
    <source>
        <dbReference type="PDB" id="1BPM"/>
    </source>
</evidence>
<evidence type="ECO:0007744" key="23">
    <source>
        <dbReference type="PDB" id="1BPN"/>
    </source>
</evidence>
<evidence type="ECO:0007744" key="24">
    <source>
        <dbReference type="PDB" id="1LAM"/>
    </source>
</evidence>
<evidence type="ECO:0007744" key="25">
    <source>
        <dbReference type="PDB" id="1LAN"/>
    </source>
</evidence>
<evidence type="ECO:0007744" key="26">
    <source>
        <dbReference type="PDB" id="1LAP"/>
    </source>
</evidence>
<evidence type="ECO:0007744" key="27">
    <source>
        <dbReference type="PDB" id="1LCP"/>
    </source>
</evidence>
<evidence type="ECO:0007744" key="28">
    <source>
        <dbReference type="PDB" id="2EWB"/>
    </source>
</evidence>
<evidence type="ECO:0007744" key="29">
    <source>
        <dbReference type="PDB" id="2J9A"/>
    </source>
</evidence>
<evidence type="ECO:0007829" key="30">
    <source>
        <dbReference type="PDB" id="1BPM"/>
    </source>
</evidence>
<evidence type="ECO:0007829" key="31">
    <source>
        <dbReference type="PDB" id="1BPN"/>
    </source>
</evidence>
<evidence type="ECO:0007829" key="32">
    <source>
        <dbReference type="PDB" id="1LAM"/>
    </source>
</evidence>
<organism>
    <name type="scientific">Bos taurus</name>
    <name type="common">Bovine</name>
    <dbReference type="NCBI Taxonomy" id="9913"/>
    <lineage>
        <taxon>Eukaryota</taxon>
        <taxon>Metazoa</taxon>
        <taxon>Chordata</taxon>
        <taxon>Craniata</taxon>
        <taxon>Vertebrata</taxon>
        <taxon>Euteleostomi</taxon>
        <taxon>Mammalia</taxon>
        <taxon>Eutheria</taxon>
        <taxon>Laurasiatheria</taxon>
        <taxon>Artiodactyla</taxon>
        <taxon>Ruminantia</taxon>
        <taxon>Pecora</taxon>
        <taxon>Bovidae</taxon>
        <taxon>Bovinae</taxon>
        <taxon>Bos</taxon>
    </lineage>
</organism>